<organism>
    <name type="scientific">Emericella nidulans (strain FGSC A4 / ATCC 38163 / CBS 112.46 / NRRL 194 / M139)</name>
    <name type="common">Aspergillus nidulans</name>
    <dbReference type="NCBI Taxonomy" id="227321"/>
    <lineage>
        <taxon>Eukaryota</taxon>
        <taxon>Fungi</taxon>
        <taxon>Dikarya</taxon>
        <taxon>Ascomycota</taxon>
        <taxon>Pezizomycotina</taxon>
        <taxon>Eurotiomycetes</taxon>
        <taxon>Eurotiomycetidae</taxon>
        <taxon>Eurotiales</taxon>
        <taxon>Aspergillaceae</taxon>
        <taxon>Aspergillus</taxon>
        <taxon>Aspergillus subgen. Nidulantes</taxon>
    </lineage>
</organism>
<gene>
    <name evidence="1" type="primary">mmm1</name>
    <name type="ORF">AN9528</name>
</gene>
<comment type="function">
    <text evidence="1">Component of the ERMES/MDM complex, which serves as a molecular tether to connect the endoplasmic reticulum (ER) and mitochondria. Components of this complex are involved in the control of mitochondrial shape and protein biogenesis, and function in nonvesicular lipid trafficking between the ER and mitochondria. The mdm12-mmm1 subcomplex functions in the major beta-barrel assembly pathway that is responsible for biogenesis of all outer membrane beta-barrel proteins, and acts in a late step after the SAM complex. The mdm10-mdm12-mmm1 subcomplex further acts in the TOM40-specific pathway after the action of the mdm12-mmm1 complex. Essential for establishing and maintaining the structure of mitochondria and maintenance of mtDNA nucleoids.</text>
</comment>
<comment type="subunit">
    <text evidence="1">Homodimer. Component of the ER-mitochondria encounter structure (ERMES) or MDM complex, composed of mmm1, mdm10, mdm12 and mdm34. A mmm1 homodimer associates with one molecule of mdm12 on each side in a pairwise head-to-tail manner, and the SMP-LTD domains of mmm1 and mdm12 generate a continuous hydrophobic tunnel for phospholipid trafficking.</text>
</comment>
<comment type="subcellular location">
    <subcellularLocation>
        <location evidence="1">Endoplasmic reticulum membrane</location>
        <topology evidence="1">Single-pass type I membrane protein</topology>
    </subcellularLocation>
    <text evidence="1">The ERMES/MDM complex localizes to a few discrete foci (around 10 per single cell), that represent mitochondria-endoplasmic reticulum junctions. These foci are often found next to mtDNA nucleoids.</text>
</comment>
<comment type="domain">
    <text evidence="1">The SMP-LTD domain is a barrel-like domain that can bind various types of glycerophospholipids in its interior and mediate their transfer between two adjacent bilayers.</text>
</comment>
<comment type="similarity">
    <text evidence="1">Belongs to the MMM1 family.</text>
</comment>
<comment type="sequence caution" evidence="3">
    <conflict type="erroneous gene model prediction">
        <sequence resource="EMBL-CDS" id="EAA66734"/>
    </conflict>
</comment>
<evidence type="ECO:0000255" key="1">
    <source>
        <dbReference type="HAMAP-Rule" id="MF_03103"/>
    </source>
</evidence>
<evidence type="ECO:0000256" key="2">
    <source>
        <dbReference type="SAM" id="MobiDB-lite"/>
    </source>
</evidence>
<evidence type="ECO:0000305" key="3"/>
<name>MMM1_EMENI</name>
<reference key="1">
    <citation type="journal article" date="2005" name="Nature">
        <title>Sequencing of Aspergillus nidulans and comparative analysis with A. fumigatus and A. oryzae.</title>
        <authorList>
            <person name="Galagan J.E."/>
            <person name="Calvo S.E."/>
            <person name="Cuomo C."/>
            <person name="Ma L.-J."/>
            <person name="Wortman J.R."/>
            <person name="Batzoglou S."/>
            <person name="Lee S.-I."/>
            <person name="Bastuerkmen M."/>
            <person name="Spevak C.C."/>
            <person name="Clutterbuck J."/>
            <person name="Kapitonov V."/>
            <person name="Jurka J."/>
            <person name="Scazzocchio C."/>
            <person name="Farman M.L."/>
            <person name="Butler J."/>
            <person name="Purcell S."/>
            <person name="Harris S."/>
            <person name="Braus G.H."/>
            <person name="Draht O."/>
            <person name="Busch S."/>
            <person name="D'Enfert C."/>
            <person name="Bouchier C."/>
            <person name="Goldman G.H."/>
            <person name="Bell-Pedersen D."/>
            <person name="Griffiths-Jones S."/>
            <person name="Doonan J.H."/>
            <person name="Yu J."/>
            <person name="Vienken K."/>
            <person name="Pain A."/>
            <person name="Freitag M."/>
            <person name="Selker E.U."/>
            <person name="Archer D.B."/>
            <person name="Penalva M.A."/>
            <person name="Oakley B.R."/>
            <person name="Momany M."/>
            <person name="Tanaka T."/>
            <person name="Kumagai T."/>
            <person name="Asai K."/>
            <person name="Machida M."/>
            <person name="Nierman W.C."/>
            <person name="Denning D.W."/>
            <person name="Caddick M.X."/>
            <person name="Hynes M."/>
            <person name="Paoletti M."/>
            <person name="Fischer R."/>
            <person name="Miller B.L."/>
            <person name="Dyer P.S."/>
            <person name="Sachs M.S."/>
            <person name="Osmani S.A."/>
            <person name="Birren B.W."/>
        </authorList>
    </citation>
    <scope>NUCLEOTIDE SEQUENCE [LARGE SCALE GENOMIC DNA]</scope>
    <source>
        <strain>FGSC A4 / ATCC 38163 / CBS 112.46 / NRRL 194 / M139</strain>
    </source>
</reference>
<reference key="2">
    <citation type="journal article" date="2009" name="Fungal Genet. Biol.">
        <title>The 2008 update of the Aspergillus nidulans genome annotation: a community effort.</title>
        <authorList>
            <person name="Wortman J.R."/>
            <person name="Gilsenan J.M."/>
            <person name="Joardar V."/>
            <person name="Deegan J."/>
            <person name="Clutterbuck J."/>
            <person name="Andersen M.R."/>
            <person name="Archer D."/>
            <person name="Bencina M."/>
            <person name="Braus G."/>
            <person name="Coutinho P."/>
            <person name="von Dohren H."/>
            <person name="Doonan J."/>
            <person name="Driessen A.J."/>
            <person name="Durek P."/>
            <person name="Espeso E."/>
            <person name="Fekete E."/>
            <person name="Flipphi M."/>
            <person name="Estrada C.G."/>
            <person name="Geysens S."/>
            <person name="Goldman G."/>
            <person name="de Groot P.W."/>
            <person name="Hansen K."/>
            <person name="Harris S.D."/>
            <person name="Heinekamp T."/>
            <person name="Helmstaedt K."/>
            <person name="Henrissat B."/>
            <person name="Hofmann G."/>
            <person name="Homan T."/>
            <person name="Horio T."/>
            <person name="Horiuchi H."/>
            <person name="James S."/>
            <person name="Jones M."/>
            <person name="Karaffa L."/>
            <person name="Karanyi Z."/>
            <person name="Kato M."/>
            <person name="Keller N."/>
            <person name="Kelly D.E."/>
            <person name="Kiel J.A."/>
            <person name="Kim J.M."/>
            <person name="van der Klei I.J."/>
            <person name="Klis F.M."/>
            <person name="Kovalchuk A."/>
            <person name="Krasevec N."/>
            <person name="Kubicek C.P."/>
            <person name="Liu B."/>
            <person name="Maccabe A."/>
            <person name="Meyer V."/>
            <person name="Mirabito P."/>
            <person name="Miskei M."/>
            <person name="Mos M."/>
            <person name="Mullins J."/>
            <person name="Nelson D.R."/>
            <person name="Nielsen J."/>
            <person name="Oakley B.R."/>
            <person name="Osmani S.A."/>
            <person name="Pakula T."/>
            <person name="Paszewski A."/>
            <person name="Paulsen I."/>
            <person name="Pilsyk S."/>
            <person name="Pocsi I."/>
            <person name="Punt P.J."/>
            <person name="Ram A.F."/>
            <person name="Ren Q."/>
            <person name="Robellet X."/>
            <person name="Robson G."/>
            <person name="Seiboth B."/>
            <person name="van Solingen P."/>
            <person name="Specht T."/>
            <person name="Sun J."/>
            <person name="Taheri-Talesh N."/>
            <person name="Takeshita N."/>
            <person name="Ussery D."/>
            <person name="vanKuyk P.A."/>
            <person name="Visser H."/>
            <person name="van de Vondervoort P.J."/>
            <person name="de Vries R.P."/>
            <person name="Walton J."/>
            <person name="Xiang X."/>
            <person name="Xiong Y."/>
            <person name="Zeng A.P."/>
            <person name="Brandt B.W."/>
            <person name="Cornell M.J."/>
            <person name="van den Hondel C.A."/>
            <person name="Visser J."/>
            <person name="Oliver S.G."/>
            <person name="Turner G."/>
        </authorList>
    </citation>
    <scope>GENOME REANNOTATION</scope>
    <source>
        <strain>FGSC A4 / ATCC 38163 / CBS 112.46 / NRRL 194 / M139</strain>
    </source>
</reference>
<protein>
    <recommendedName>
        <fullName evidence="1">Maintenance of mitochondrial morphology protein 1</fullName>
    </recommendedName>
</protein>
<accession>Q5AQA2</accession>
<accession>C8V0W0</accession>
<sequence>MAFQQGEAAPVSTQSSLSFTQGFLLGQLSVVLLIGAFIKFFIFGEAPPPPSRGLRASTHRRSNSIFSQDAPPPRSLREKPSTSNVLRPVPSSATNTRSILRKTYYSAIPPNPSSKHRIHHSSHQPESLDWFNVLIAQTIAQYRQTAYLLKDSPTSSILHSLTAALNNPEKKPSFIDKITVTDISLGEEFPIFSNCRIIAVDDPMSDGGRLQALLDVDMSDDNLSIAVETSLVLNYPKPCSAILPVALSISVVRFSGTLCISLVPASTPPLHTPSPMPSPPTAGAQPAAGAQPTDGGDIPPKSSSKSNIAFSFLPDYRLDLSVRSLIGSRSRLQDVPKVAQLVEARVHAWFEERVVEPRVQVVGLPDLWPRMGRTGVRTGDESETGSNTASRPAMSVDMSSPGHLQGDGGNHEEELRFRGLGPRPPLPFDAVSRTSSYQVETGAPRSPSLTRERSLGDDFHMPGSMPEAPGAQ</sequence>
<keyword id="KW-0256">Endoplasmic reticulum</keyword>
<keyword id="KW-0445">Lipid transport</keyword>
<keyword id="KW-0446">Lipid-binding</keyword>
<keyword id="KW-0472">Membrane</keyword>
<keyword id="KW-1185">Reference proteome</keyword>
<keyword id="KW-0812">Transmembrane</keyword>
<keyword id="KW-1133">Transmembrane helix</keyword>
<keyword id="KW-0813">Transport</keyword>
<dbReference type="EMBL" id="AACD01000234">
    <property type="protein sequence ID" value="EAA66734.1"/>
    <property type="status" value="ALT_SEQ"/>
    <property type="molecule type" value="Genomic_DNA"/>
</dbReference>
<dbReference type="EMBL" id="BN001301">
    <property type="protein sequence ID" value="CBF71019.1"/>
    <property type="molecule type" value="Genomic_DNA"/>
</dbReference>
<dbReference type="RefSeq" id="XP_868910.1">
    <property type="nucleotide sequence ID" value="XM_863817.1"/>
</dbReference>
<dbReference type="SMR" id="Q5AQA2"/>
<dbReference type="FunCoup" id="Q5AQA2">
    <property type="interactions" value="70"/>
</dbReference>
<dbReference type="STRING" id="227321.Q5AQA2"/>
<dbReference type="EnsemblFungi" id="CBF71019">
    <property type="protein sequence ID" value="CBF71019"/>
    <property type="gene ID" value="ANIA_09528"/>
</dbReference>
<dbReference type="VEuPathDB" id="FungiDB:AN9528"/>
<dbReference type="eggNOG" id="ENOG502QUUW">
    <property type="taxonomic scope" value="Eukaryota"/>
</dbReference>
<dbReference type="HOGENOM" id="CLU_032730_1_0_1"/>
<dbReference type="InParanoid" id="Q5AQA2"/>
<dbReference type="OMA" id="WSFTQGL"/>
<dbReference type="OrthoDB" id="5376138at2759"/>
<dbReference type="Proteomes" id="UP000000560">
    <property type="component" value="Chromosome I"/>
</dbReference>
<dbReference type="GO" id="GO:0005783">
    <property type="term" value="C:endoplasmic reticulum"/>
    <property type="evidence" value="ECO:0000318"/>
    <property type="project" value="GO_Central"/>
</dbReference>
<dbReference type="GO" id="GO:0005789">
    <property type="term" value="C:endoplasmic reticulum membrane"/>
    <property type="evidence" value="ECO:0007669"/>
    <property type="project" value="UniProtKB-SubCell"/>
</dbReference>
<dbReference type="GO" id="GO:0032865">
    <property type="term" value="C:ERMES complex"/>
    <property type="evidence" value="ECO:0000318"/>
    <property type="project" value="GO_Central"/>
</dbReference>
<dbReference type="GO" id="GO:0008289">
    <property type="term" value="F:lipid binding"/>
    <property type="evidence" value="ECO:0000318"/>
    <property type="project" value="GO_Central"/>
</dbReference>
<dbReference type="GO" id="GO:0015917">
    <property type="term" value="P:aminophospholipid transport"/>
    <property type="evidence" value="ECO:0000318"/>
    <property type="project" value="GO_Central"/>
</dbReference>
<dbReference type="GO" id="GO:0120009">
    <property type="term" value="P:intermembrane lipid transfer"/>
    <property type="evidence" value="ECO:0007669"/>
    <property type="project" value="GOC"/>
</dbReference>
<dbReference type="GO" id="GO:0000002">
    <property type="term" value="P:mitochondrial genome maintenance"/>
    <property type="evidence" value="ECO:0007669"/>
    <property type="project" value="UniProtKB-UniRule"/>
</dbReference>
<dbReference type="GO" id="GO:1990456">
    <property type="term" value="P:mitochondrion-endoplasmic reticulum membrane tethering"/>
    <property type="evidence" value="ECO:0000318"/>
    <property type="project" value="GO_Central"/>
</dbReference>
<dbReference type="GO" id="GO:0045040">
    <property type="term" value="P:protein insertion into mitochondrial outer membrane"/>
    <property type="evidence" value="ECO:0007669"/>
    <property type="project" value="UniProtKB-UniRule"/>
</dbReference>
<dbReference type="CDD" id="cd21671">
    <property type="entry name" value="SMP_Mmm1"/>
    <property type="match status" value="1"/>
</dbReference>
<dbReference type="HAMAP" id="MF_03103">
    <property type="entry name" value="Mmm1"/>
    <property type="match status" value="1"/>
</dbReference>
<dbReference type="InterPro" id="IPR027537">
    <property type="entry name" value="Mmm1"/>
</dbReference>
<dbReference type="InterPro" id="IPR019411">
    <property type="entry name" value="MMM1_dom"/>
</dbReference>
<dbReference type="InterPro" id="IPR031468">
    <property type="entry name" value="SMP_LBD"/>
</dbReference>
<dbReference type="PANTHER" id="PTHR13466:SF0">
    <property type="entry name" value="SMP-LTD DOMAIN-CONTAINING PROTEIN"/>
    <property type="match status" value="1"/>
</dbReference>
<dbReference type="PANTHER" id="PTHR13466">
    <property type="entry name" value="TEX2 PROTEIN-RELATED"/>
    <property type="match status" value="1"/>
</dbReference>
<dbReference type="Pfam" id="PF10296">
    <property type="entry name" value="MMM1"/>
    <property type="match status" value="1"/>
</dbReference>
<dbReference type="PROSITE" id="PS51847">
    <property type="entry name" value="SMP"/>
    <property type="match status" value="1"/>
</dbReference>
<proteinExistence type="inferred from homology"/>
<feature type="chain" id="PRO_0000384230" description="Maintenance of mitochondrial morphology protein 1">
    <location>
        <begin position="1"/>
        <end position="472"/>
    </location>
</feature>
<feature type="topological domain" description="Lumenal" evidence="1">
    <location>
        <begin position="1"/>
        <end position="22"/>
    </location>
</feature>
<feature type="transmembrane region" description="Helical" evidence="1">
    <location>
        <begin position="23"/>
        <end position="43"/>
    </location>
</feature>
<feature type="topological domain" description="Cytoplasmic" evidence="1">
    <location>
        <begin position="44"/>
        <end position="472"/>
    </location>
</feature>
<feature type="domain" description="SMP-LTD" evidence="1">
    <location>
        <begin position="124"/>
        <end position="365"/>
    </location>
</feature>
<feature type="region of interest" description="Disordered" evidence="2">
    <location>
        <begin position="51"/>
        <end position="92"/>
    </location>
</feature>
<feature type="region of interest" description="Disordered" evidence="2">
    <location>
        <begin position="270"/>
        <end position="303"/>
    </location>
</feature>
<feature type="region of interest" description="Disordered" evidence="2">
    <location>
        <begin position="370"/>
        <end position="472"/>
    </location>
</feature>
<feature type="compositionally biased region" description="Polar residues" evidence="2">
    <location>
        <begin position="81"/>
        <end position="92"/>
    </location>
</feature>
<feature type="compositionally biased region" description="Pro residues" evidence="2">
    <location>
        <begin position="270"/>
        <end position="280"/>
    </location>
</feature>
<feature type="compositionally biased region" description="Low complexity" evidence="2">
    <location>
        <begin position="281"/>
        <end position="297"/>
    </location>
</feature>
<feature type="compositionally biased region" description="Basic and acidic residues" evidence="2">
    <location>
        <begin position="450"/>
        <end position="460"/>
    </location>
</feature>